<proteinExistence type="evidence at protein level"/>
<keyword id="KW-0002">3D-structure</keyword>
<keyword id="KW-0067">ATP-binding</keyword>
<keyword id="KW-1003">Cell membrane</keyword>
<keyword id="KW-0963">Cytoplasm</keyword>
<keyword id="KW-0418">Kinase</keyword>
<keyword id="KW-0472">Membrane</keyword>
<keyword id="KW-0479">Metal-binding</keyword>
<keyword id="KW-0488">Methylation</keyword>
<keyword id="KW-0496">Mitochondrion</keyword>
<keyword id="KW-0547">Nucleotide-binding</keyword>
<keyword id="KW-0539">Nucleus</keyword>
<keyword id="KW-0597">Phosphoprotein</keyword>
<keyword id="KW-0656">Proto-oncogene</keyword>
<keyword id="KW-1185">Reference proteome</keyword>
<keyword id="KW-0723">Serine/threonine-protein kinase</keyword>
<keyword id="KW-0808">Transferase</keyword>
<keyword id="KW-0862">Zinc</keyword>
<keyword id="KW-0863">Zinc-finger</keyword>
<name>RAF1_RAT</name>
<feature type="chain" id="PRO_0000086598" description="RAF proto-oncogene serine/threonine-protein kinase">
    <location>
        <begin position="1"/>
        <end position="648"/>
    </location>
</feature>
<feature type="domain" description="RBD" evidence="6">
    <location>
        <begin position="56"/>
        <end position="131"/>
    </location>
</feature>
<feature type="domain" description="Protein kinase" evidence="4">
    <location>
        <begin position="349"/>
        <end position="609"/>
    </location>
</feature>
<feature type="zinc finger region" description="Phorbol-ester/DAG-type" evidence="5">
    <location>
        <begin position="138"/>
        <end position="184"/>
    </location>
</feature>
<feature type="region of interest" description="Disordered" evidence="8">
    <location>
        <begin position="217"/>
        <end position="335"/>
    </location>
</feature>
<feature type="region of interest" description="Interaction with PEBP1/RKIP" evidence="1">
    <location>
        <begin position="331"/>
        <end position="349"/>
    </location>
</feature>
<feature type="compositionally biased region" description="Polar residues" evidence="8">
    <location>
        <begin position="239"/>
        <end position="271"/>
    </location>
</feature>
<feature type="compositionally biased region" description="Basic and acidic residues" evidence="8">
    <location>
        <begin position="275"/>
        <end position="285"/>
    </location>
</feature>
<feature type="compositionally biased region" description="Low complexity" evidence="8">
    <location>
        <begin position="286"/>
        <end position="301"/>
    </location>
</feature>
<feature type="active site" description="Proton acceptor" evidence="4 7">
    <location>
        <position position="468"/>
    </location>
</feature>
<feature type="binding site" evidence="1">
    <location>
        <position position="139"/>
    </location>
    <ligand>
        <name>Zn(2+)</name>
        <dbReference type="ChEBI" id="CHEBI:29105"/>
        <label>1</label>
    </ligand>
</feature>
<feature type="binding site" evidence="1">
    <location>
        <position position="152"/>
    </location>
    <ligand>
        <name>Zn(2+)</name>
        <dbReference type="ChEBI" id="CHEBI:29105"/>
        <label>2</label>
    </ligand>
</feature>
<feature type="binding site" evidence="1">
    <location>
        <position position="155"/>
    </location>
    <ligand>
        <name>Zn(2+)</name>
        <dbReference type="ChEBI" id="CHEBI:29105"/>
        <label>2</label>
    </ligand>
</feature>
<feature type="binding site" evidence="1">
    <location>
        <position position="165"/>
    </location>
    <ligand>
        <name>Zn(2+)</name>
        <dbReference type="ChEBI" id="CHEBI:29105"/>
        <label>1</label>
    </ligand>
</feature>
<feature type="binding site" evidence="1">
    <location>
        <position position="168"/>
    </location>
    <ligand>
        <name>Zn(2+)</name>
        <dbReference type="ChEBI" id="CHEBI:29105"/>
        <label>1</label>
    </ligand>
</feature>
<feature type="binding site" evidence="1">
    <location>
        <position position="173"/>
    </location>
    <ligand>
        <name>Zn(2+)</name>
        <dbReference type="ChEBI" id="CHEBI:29105"/>
        <label>2</label>
    </ligand>
</feature>
<feature type="binding site" evidence="1">
    <location>
        <position position="176"/>
    </location>
    <ligand>
        <name>Zn(2+)</name>
        <dbReference type="ChEBI" id="CHEBI:29105"/>
        <label>2</label>
    </ligand>
</feature>
<feature type="binding site" evidence="1">
    <location>
        <position position="184"/>
    </location>
    <ligand>
        <name>Zn(2+)</name>
        <dbReference type="ChEBI" id="CHEBI:29105"/>
        <label>1</label>
    </ligand>
</feature>
<feature type="binding site" evidence="4">
    <location>
        <begin position="355"/>
        <end position="363"/>
    </location>
    <ligand>
        <name>ATP</name>
        <dbReference type="ChEBI" id="CHEBI:30616"/>
    </ligand>
</feature>
<feature type="binding site" evidence="4">
    <location>
        <position position="375"/>
    </location>
    <ligand>
        <name>ATP</name>
        <dbReference type="ChEBI" id="CHEBI:30616"/>
    </ligand>
</feature>
<feature type="modified residue" description="Phosphoserine; by MAPK1" evidence="3">
    <location>
        <position position="29"/>
    </location>
</feature>
<feature type="modified residue" description="Phosphoserine" evidence="14">
    <location>
        <position position="43"/>
    </location>
</feature>
<feature type="modified residue" description="Phosphoserine; by PKA" evidence="2">
    <location>
        <position position="233"/>
    </location>
</feature>
<feature type="modified residue" description="Phosphoserine" evidence="2">
    <location>
        <position position="252"/>
    </location>
</feature>
<feature type="modified residue" description="Phosphoserine" evidence="14">
    <location>
        <position position="259"/>
    </location>
</feature>
<feature type="modified residue" description="Phosphothreonine; by autocatalysis" evidence="2">
    <location>
        <position position="268"/>
    </location>
</feature>
<feature type="modified residue" description="Phosphothreonine; by PKA" evidence="2">
    <location>
        <position position="269"/>
    </location>
</feature>
<feature type="modified residue" description="Phosphoserine; by MAPK1" evidence="2">
    <location>
        <position position="289"/>
    </location>
</feature>
<feature type="modified residue" description="Phosphoserine; by MAPK1" evidence="3">
    <location>
        <position position="296"/>
    </location>
</feature>
<feature type="modified residue" description="Phosphoserine; by MAPK1" evidence="2">
    <location>
        <position position="301"/>
    </location>
</feature>
<feature type="modified residue" description="Phosphoserine; by PAK1, PAK2, PAK3 and PAK5" evidence="2">
    <location>
        <position position="338"/>
    </location>
</feature>
<feature type="modified residue" description="Phosphoserine; by PAK1, PAK2 and PAK3" evidence="2">
    <location>
        <position position="339"/>
    </location>
</feature>
<feature type="modified residue" description="Phosphotyrosine; by SRC" evidence="2">
    <location>
        <position position="340"/>
    </location>
</feature>
<feature type="modified residue" description="Phosphotyrosine; by SRC" evidence="2">
    <location>
        <position position="341"/>
    </location>
</feature>
<feature type="modified residue" description="Phosphoserine" evidence="2">
    <location>
        <position position="471"/>
    </location>
</feature>
<feature type="modified residue" description="Phosphothreonine" evidence="2">
    <location>
        <position position="491"/>
    </location>
</feature>
<feature type="modified residue" description="Phosphoserine" evidence="2">
    <location>
        <position position="494"/>
    </location>
</feature>
<feature type="modified residue" description="Phosphoserine; by PKC" evidence="2">
    <location>
        <position position="497"/>
    </location>
</feature>
<feature type="modified residue" description="Phosphoserine; by PKC" evidence="2">
    <location>
        <position position="499"/>
    </location>
</feature>
<feature type="modified residue" description="Symmetric dimethylarginine; by PRMT5" evidence="2">
    <location>
        <position position="563"/>
    </location>
</feature>
<feature type="modified residue" description="Phosphoserine" evidence="2">
    <location>
        <position position="621"/>
    </location>
</feature>
<feature type="modified residue" description="Phosphoserine; by MAPK1" evidence="2">
    <location>
        <position position="642"/>
    </location>
</feature>
<feature type="strand" evidence="15">
    <location>
        <begin position="57"/>
        <end position="61"/>
    </location>
</feature>
<feature type="turn" evidence="15">
    <location>
        <begin position="63"/>
        <end position="65"/>
    </location>
</feature>
<feature type="strand" evidence="15">
    <location>
        <begin position="68"/>
        <end position="71"/>
    </location>
</feature>
<feature type="helix" evidence="15">
    <location>
        <begin position="78"/>
        <end position="89"/>
    </location>
</feature>
<feature type="turn" evidence="15">
    <location>
        <begin position="93"/>
        <end position="95"/>
    </location>
</feature>
<feature type="strand" evidence="15">
    <location>
        <begin position="96"/>
        <end position="100"/>
    </location>
</feature>
<feature type="strand" evidence="15">
    <location>
        <begin position="106"/>
        <end position="108"/>
    </location>
</feature>
<feature type="helix" evidence="15">
    <location>
        <begin position="118"/>
        <end position="121"/>
    </location>
</feature>
<feature type="strand" evidence="15">
    <location>
        <begin position="124"/>
        <end position="130"/>
    </location>
</feature>
<comment type="function">
    <text evidence="1 10 12">Serine/threonine-protein kinase that acts as a regulatory link between the membrane-associated Ras GTPases and the MAPK/ERK cascade, and this critical regulatory link functions as a switch determining cell fate decisions including proliferation, differentiation, apoptosis, survival and oncogenic transformation. RAF1 activation initiates a mitogen-activated protein kinase (MAPK) cascade that comprises a sequential phosphorylation of the dual-specific MAPK kinases (MAP2K1/MEK1 and MAP2K2/MEK2) and the extracellular signal-regulated kinases (MAPK3/ERK1 and MAPK1/ERK2). The phosphorylated form of RAF1 (on residues Ser-338 and Ser-339, by PAK1) phosphorylates BAD/Bcl2-antagonist of cell death at 'Ser-75'. Phosphorylates adenylyl cyclases: ADCY2, ADCY5 and ADCY6, resulting in their activation. Phosphorylates PPP1R12A resulting in inhibition of the phosphatase activity. Can promote NF-kB activation and inhibit signal transducers involved in motility (ROCK2), apoptosis (MAP3K5/ASK1 and STK3/MST2), proliferation and angiogenesis (RB1). Can protect cells from apoptosis also by translocating to the mitochondria where it binds BCL2 and displaces BAD/Bcl2-antagonist of cell death. Regulates Rho signaling and migration, and is required for normal wound healing. Plays a role in the oncogenic transformation of epithelial cells via repression of the TJ protein, occludin (OCLN) by inducing the up-regulation of a transcriptional repressor SNAI2/SLUG, which induces down-regulation of OCLN. Restricts caspase activation in response to selected stimuli, notably Fas stimulation, pathogen-mediated macrophage apoptosis, and erythroid differentiation (By similarity). Phosphorylates TNNT2/cardiac muscle troponin T.</text>
</comment>
<comment type="catalytic activity">
    <reaction evidence="2">
        <text>L-seryl-[protein] + ATP = O-phospho-L-seryl-[protein] + ADP + H(+)</text>
        <dbReference type="Rhea" id="RHEA:17989"/>
        <dbReference type="Rhea" id="RHEA-COMP:9863"/>
        <dbReference type="Rhea" id="RHEA-COMP:11604"/>
        <dbReference type="ChEBI" id="CHEBI:15378"/>
        <dbReference type="ChEBI" id="CHEBI:29999"/>
        <dbReference type="ChEBI" id="CHEBI:30616"/>
        <dbReference type="ChEBI" id="CHEBI:83421"/>
        <dbReference type="ChEBI" id="CHEBI:456216"/>
        <dbReference type="EC" id="2.7.11.1"/>
    </reaction>
    <physiologicalReaction direction="left-to-right" evidence="2">
        <dbReference type="Rhea" id="RHEA:17990"/>
    </physiologicalReaction>
</comment>
<comment type="catalytic activity">
    <reaction evidence="2">
        <text>L-threonyl-[protein] + ATP = O-phospho-L-threonyl-[protein] + ADP + H(+)</text>
        <dbReference type="Rhea" id="RHEA:46608"/>
        <dbReference type="Rhea" id="RHEA-COMP:11060"/>
        <dbReference type="Rhea" id="RHEA-COMP:11605"/>
        <dbReference type="ChEBI" id="CHEBI:15378"/>
        <dbReference type="ChEBI" id="CHEBI:30013"/>
        <dbReference type="ChEBI" id="CHEBI:30616"/>
        <dbReference type="ChEBI" id="CHEBI:61977"/>
        <dbReference type="ChEBI" id="CHEBI:456216"/>
        <dbReference type="EC" id="2.7.11.1"/>
    </reaction>
    <physiologicalReaction direction="left-to-right" evidence="2">
        <dbReference type="Rhea" id="RHEA:46609"/>
    </physiologicalReaction>
</comment>
<comment type="cofactor">
    <cofactor evidence="1">
        <name>Zn(2+)</name>
        <dbReference type="ChEBI" id="CHEBI:29105"/>
    </cofactor>
    <text evidence="1">Binds 2 Zn(2+) ions per subunit.</text>
</comment>
<comment type="activity regulation">
    <text evidence="1">Regulation is a highly complex process involving membrane recruitment, protein-protein interactions, dimerization, and phosphorylation/dephosphorylation events. Ras-GTP recruits RAF1 to the membrane, thereby promoting its activation. The inactive conformation of RAF1 is maintained by autoinhibitory interactions occurring between the N-terminal regulatory and the C-terminal catalytic domains and by the binding of a 14-3-3 protein that contacts two phosphorylation sites, Ser-259 and Ser-621. Upon mitogenic stimulation, Ras and PPP2R1A cooperate to release autoinhibition and the subsequent phosphorylation of activating sites: Ser-338, Tyr-341, Thr-491, and Ser-494, yields a fully active kinase. Through a negative feedback mechanism involving MAPK1/ERK2, RAF1 is phosphorylated on Ser-29, Ser-43, Ser-289, Ser-296, Ser-301 and Ser-642 by MAPK1/ERK2, which yields an inactive, desensitized kinase. The signaling-competent conformation of RAF1 is finally re-established by the coordinated action of PIN1, a prolyl isomerase that converts pSer and pThr residues from the cis to the trans conformation, which is preferentially recognized and dephosphorylated by PPP2R1A. Activated by homodimerization and heterodimerization (with BRAF). Also regulated through association with other proteins such as KSR2, CNKSR1/CNK1, PEBP1/RKIP, PHB/prohibitin and SPRY4. PEBP1/RKIP acts by dissociating RAF1 from its substrates MAP2K1/MEK1 and MAP2K2/MEK2. PHB/prohibitin facilitates the displacement of 14-3-3 from RAF1 by activated Ras, thereby promoting cell membrane localization and phosphorylation of RAF1 at the activating Ser-338. SPRY4 inhibits Ras-independent, but not Ras-dependent, activation of RAF1. CNKSR1/CNK1 regulates Src-mediated RAF1 activation (By similarity).</text>
</comment>
<comment type="subunit">
    <text evidence="2 3 9 11 12">Monomer (By similarity). Homodimer (By similarity). Heterodimerizes with BRAF and this heterodimer possesses a highly increased kinase activity compared to the respective homodimers or monomers (By similarity). Heterodimerization is mitogen-regulated and enhanced by 14-3-3 proteins (By similarity). MAPK1/ERK2 activation can induce a negative feedback that promotes the dissociation of the heterodimer (By similarity). Forms a multiprotein complex with Ras (M-Ras/MRAS), SHOC2 and protein phosphatase 1 (PPP1CA, PPP1CB and PPP1CC) (By similarity). Interacts with LZTR1 (By similarity). Interacts with Ras proteins; the interaction is antagonized by RIN1 (By similarity). Weakly interacts with RIT1 (By similarity). Interacts with STK3/MST2; the interaction inhibits its pro-apoptotic activity (By similarity). Interacts (when phosphorylated at Ser-259) with YWHAZ (unphosphorylated at 'Thr-232') (By similarity). Interacts with MAP3K5/ASF1 (via N-terminus) and this interaction inhibits the proapoptotic function of MAP3K5/ASK1 (By similarity). Interacts with PAK1 (via kinase domain) (By similarity). The phosphorylated form interacts with PIN1 (By similarity). The Ser-338 and Ser-339 phosphorylated form (by PAK1) interacts with BCL2 (By similarity). Interacts with PEBP1/RKIP and this interaction is enhanced if RAF1 is phosphorylated on residues Ser-338, Ser-339, Tyr-340 and Tyr-341 (By similarity). Interacts with ADCY2, ADCY5, ADCY6, DGKH, RCAN1/DSCR1, PPP1R12A, PKB/AKT1, PPP2CA, PPP2R1B, SPRY2, SPRY4, CNKSR1/CNK1, KSR2 and PHB/prohibitin (By similarity). Interacts with ROCK2 (By similarity). Interacts (via N-terminus) with RGS14 (via RBD domains); the interaction mediates the formation of a ternary complex with BRAF, a ternary complex inhibited by GNAI1 (PubMed:19319189, PubMed:19878719). Probably forms a complex composed of chaperones HSP90 and HSP70, co-chaperones CDC37, PPP5C, TSC1 and client protein TSC2, CDK4, AKT, RAF1 and NR3C1; this complex does not contain co-chaperones STIP1/HOP and PTGES3/p23 (By similarity). Interacts with MAP2K1/MEK1 and MAP2K2/MEK2 (PubMed:7565670). In its active form, interacts with PRMT5 (By similarity). Interacts with FAM83B; displaces 14-3-3 proteins from RAF1 and activates RAF1 (By similarity). Interacts with PDE8A; the interaction promotes RAF1 activity (By similarity). Interacts with MFHAS1 (By similarity). Interacts with GLS (By similarity). Interacts with YWHAZ. Interacts with NEK10 and MAP2K1; the interaction is direct with NEK10 and required for ERK1/2-signaling pathway activation in response to UV irradiation (By similarity).</text>
</comment>
<comment type="interaction">
    <interactant intactId="EBI-931534">
        <id>P11345</id>
    </interactant>
    <interactant intactId="EBI-4303019">
        <id>P29066</id>
        <label>Arrb1</label>
    </interactant>
    <organismsDiffer>false</organismsDiffer>
    <experiments>5</experiments>
</comment>
<comment type="subcellular location">
    <subcellularLocation>
        <location evidence="1">Cytoplasm</location>
    </subcellularLocation>
    <subcellularLocation>
        <location evidence="1">Cell membrane</location>
    </subcellularLocation>
    <subcellularLocation>
        <location evidence="1">Mitochondrion</location>
    </subcellularLocation>
    <subcellularLocation>
        <location evidence="1">Nucleus</location>
    </subcellularLocation>
    <text evidence="1">Colocalizes with RGS14 and BRAF in both the cytoplasm and membranes. Phosphorylation at Ser-259 impairs its membrane accumulation. Recruited to the cell membrane by the active Ras protein. Phosphorylation at Ser-338 and Ser-339 by PAK1 is required for its mitochondrial localization. Retinoic acid-induced Ser-621 phosphorylated form of RAF1 is predominantly localized at the nucleus (By similarity).</text>
</comment>
<comment type="PTM">
    <text evidence="2">Phosphorylation at Thr-269, Ser-338, Tyr-341, Thr-491 and Ser-494 results in its activation. Phosphorylation at Ser-29, Ser-43, Ser-289, Ser-296, Ser-301 and Ser-642 by MAPK1/ERK2 results in its inactivation. Phosphorylation at Ser-259 induces the interaction with YWHAZ and inactivates kinase activity. Dephosphorylation of Ser-259 by the SHOC2-MRAS-PP1c (SMP) complex consisting of SHOC2, GTP-bound M-Ras/MRAS and the catalytic subunit of protein phosphatase 1 (PPP1CA, PPP1CB or PPP1CC); this relieves inactivation and stimulates kinase activity (By similarity). Phosphorylation at Ser-338 by PAK1 and PAK5 and Ser-339 by PAK1 is required for its mitochondrial localization (By similarity). Phosphorylation at Ser-621 in response to growth factor treatment stabilizes the protein, possibly by preventing proteasomal degradation. Phosphorylation at Ser-289, Ser-296, Ser-301, Ser-338 and Ser-621 are somehow linked to the methylation potential of cells. Treatment of cells with HGF in the presence of the methylation inhibitor 5'-methylthioadenosine (MTA) results in increased phosphorylation at Ser-338 and Ser-621 and decreased phosphorylation at Ser-296, Ser-301 and Ser-338. Dephosphorylation at Ser-338 by PPP5C results in a decreased of activity (By similarity).</text>
</comment>
<comment type="PTM">
    <text evidence="2">Methylated in response to EGF treatment. This modification leads to destabilization of the protein, possibly through proteasomal degradation (By similarity).</text>
</comment>
<comment type="similarity">
    <text evidence="13">Belongs to the protein kinase superfamily. TKL Ser/Thr protein kinase family. RAF subfamily.</text>
</comment>
<accession>P11345</accession>
<protein>
    <recommendedName>
        <fullName>RAF proto-oncogene serine/threonine-protein kinase</fullName>
        <ecNumber evidence="2">2.7.11.1</ecNumber>
    </recommendedName>
    <alternativeName>
        <fullName>Proto-oncogene c-RAF</fullName>
        <shortName>cRaf</shortName>
    </alternativeName>
    <alternativeName>
        <fullName>Raf-1</fullName>
    </alternativeName>
</protein>
<reference key="1">
    <citation type="journal article" date="1987" name="Mol. Cell. Biol.">
        <title>Rat c-raf oncogene activation by a rearrangement that produces a fused protein.</title>
        <authorList>
            <person name="Ishikawa F."/>
            <person name="Takaku F."/>
            <person name="Nagao M."/>
            <person name="Sugimura T."/>
        </authorList>
    </citation>
    <scope>NUCLEOTIDE SEQUENCE [MRNA]</scope>
</reference>
<reference key="2">
    <citation type="journal article" date="2004" name="Genome Res.">
        <title>The status, quality, and expansion of the NIH full-length cDNA project: the Mammalian Gene Collection (MGC).</title>
        <authorList>
            <consortium name="The MGC Project Team"/>
        </authorList>
    </citation>
    <scope>NUCLEOTIDE SEQUENCE [LARGE SCALE MRNA]</scope>
    <source>
        <tissue>Prostate</tissue>
    </source>
</reference>
<reference key="3">
    <citation type="journal article" date="2009" name="J. Muscle Res. Cell Motil.">
        <title>Raf-1: a novel cardiac troponin T kinase.</title>
        <authorList>
            <person name="Pfleiderer P."/>
            <person name="Sumandea M.P."/>
            <person name="Rybin V.O."/>
            <person name="Wang C."/>
            <person name="Steinberg S.F."/>
        </authorList>
    </citation>
    <scope>FUNCTION IN PHOSPHORYLATION OF TNNT2</scope>
</reference>
<reference key="4">
    <citation type="journal article" date="2009" name="PLoS ONE">
        <title>Regulator of G-protein signaling 14 (RGS14) is a selective H-Ras effector.</title>
        <authorList>
            <person name="Willard F.S."/>
            <person name="Willard M.D."/>
            <person name="Kimple A.J."/>
            <person name="Soundararajan M."/>
            <person name="Oestreich E.A."/>
            <person name="Li X."/>
            <person name="Sowa N.A."/>
            <person name="Kimple R.J."/>
            <person name="Doyle D.A."/>
            <person name="Der C.J."/>
            <person name="Zylka M.J."/>
            <person name="Snider W.D."/>
            <person name="Siderovski D.P."/>
        </authorList>
    </citation>
    <scope>INTERACTION WITH RGS14</scope>
</reference>
<reference key="5">
    <citation type="journal article" date="2010" name="Cell. Signal.">
        <title>RGS14 is a multifunctional scaffold that integrates G protein and Ras/Raf MAPkinase signalling pathways.</title>
        <authorList>
            <person name="Shu F.J."/>
            <person name="Ramineni S."/>
            <person name="Hepler J.R."/>
        </authorList>
    </citation>
    <scope>INTERACTION WITH RGS14</scope>
    <scope>SUBCELLULAR LOCATION</scope>
</reference>
<reference key="6">
    <citation type="journal article" date="1995" name="Mol. Cell. Biol.">
        <title>A proline-rich sequence unique to MEK1 and MEK2 is required for raf binding and regulates MEK function.</title>
        <authorList>
            <person name="Catling A.D."/>
            <person name="Schaeffer H.J."/>
            <person name="Reuter C.W."/>
            <person name="Reddy G.R."/>
            <person name="Weber M.J."/>
        </authorList>
    </citation>
    <scope>INTERACTION WITH MAP2K1/MEK1 AND MAP2K2/MEK2</scope>
    <scope>FUNCTION</scope>
</reference>
<reference key="7">
    <citation type="journal article" date="2011" name="Sci. Signal.">
        <title>Protein arginine methyltransferase 5 regulates ERK1/2 signal transduction amplitude and cell fate through CRAF.</title>
        <authorList>
            <person name="Andreu-Perez P."/>
            <person name="Esteve-Puig R."/>
            <person name="de Torre-Minguela C."/>
            <person name="Lopez-Fauqued M."/>
            <person name="Bech-Serra J.J."/>
            <person name="Tenbaum S."/>
            <person name="Garcia-Trevijano E.R."/>
            <person name="Canals F."/>
            <person name="Merlino G."/>
            <person name="Avila M.A."/>
            <person name="Recio J.A."/>
        </authorList>
    </citation>
    <scope>METHYLATION</scope>
</reference>
<reference key="8">
    <citation type="journal article" date="2012" name="Nat. Commun.">
        <title>Quantitative maps of protein phosphorylation sites across 14 different rat organs and tissues.</title>
        <authorList>
            <person name="Lundby A."/>
            <person name="Secher A."/>
            <person name="Lage K."/>
            <person name="Nordsborg N.B."/>
            <person name="Dmytriyev A."/>
            <person name="Lundby C."/>
            <person name="Olsen J.V."/>
        </authorList>
    </citation>
    <scope>PHOSPHORYLATION [LARGE SCALE ANALYSIS] AT SER-43 AND SER-259</scope>
    <scope>IDENTIFICATION BY MASS SPECTROMETRY [LARGE SCALE ANALYSIS]</scope>
</reference>
<reference key="9">
    <citation type="journal article" date="1999" name="J. Mol. Biol.">
        <title>Nuclear magnetic resonance and molecular dynamics studies on the interactions of the Ras-binding domain of Raf-1 with wild-type and mutant Ras proteins.</title>
        <authorList>
            <person name="Terada T."/>
            <person name="Ito Y."/>
            <person name="Shirouzu M."/>
            <person name="Tateno M."/>
            <person name="Hashimoto K."/>
            <person name="Kigawa T."/>
            <person name="Ebisuzaki T."/>
            <person name="Takio K."/>
            <person name="Shibata T."/>
            <person name="Yokoyama S."/>
            <person name="Smith B.O."/>
            <person name="Laue E.D."/>
            <person name="Cooper J.A."/>
        </authorList>
    </citation>
    <scope>STRUCTURE BY NMR OF 51-131</scope>
</reference>
<evidence type="ECO:0000250" key="1"/>
<evidence type="ECO:0000250" key="2">
    <source>
        <dbReference type="UniProtKB" id="P04049"/>
    </source>
</evidence>
<evidence type="ECO:0000250" key="3">
    <source>
        <dbReference type="UniProtKB" id="Q99N57"/>
    </source>
</evidence>
<evidence type="ECO:0000255" key="4">
    <source>
        <dbReference type="PROSITE-ProRule" id="PRU00159"/>
    </source>
</evidence>
<evidence type="ECO:0000255" key="5">
    <source>
        <dbReference type="PROSITE-ProRule" id="PRU00226"/>
    </source>
</evidence>
<evidence type="ECO:0000255" key="6">
    <source>
        <dbReference type="PROSITE-ProRule" id="PRU00262"/>
    </source>
</evidence>
<evidence type="ECO:0000255" key="7">
    <source>
        <dbReference type="PROSITE-ProRule" id="PRU10027"/>
    </source>
</evidence>
<evidence type="ECO:0000256" key="8">
    <source>
        <dbReference type="SAM" id="MobiDB-lite"/>
    </source>
</evidence>
<evidence type="ECO:0000269" key="9">
    <source>
    </source>
</evidence>
<evidence type="ECO:0000269" key="10">
    <source>
    </source>
</evidence>
<evidence type="ECO:0000269" key="11">
    <source>
    </source>
</evidence>
<evidence type="ECO:0000269" key="12">
    <source>
    </source>
</evidence>
<evidence type="ECO:0000305" key="13"/>
<evidence type="ECO:0007744" key="14">
    <source>
    </source>
</evidence>
<evidence type="ECO:0007829" key="15">
    <source>
        <dbReference type="PDB" id="1RRB"/>
    </source>
</evidence>
<organism>
    <name type="scientific">Rattus norvegicus</name>
    <name type="common">Rat</name>
    <dbReference type="NCBI Taxonomy" id="10116"/>
    <lineage>
        <taxon>Eukaryota</taxon>
        <taxon>Metazoa</taxon>
        <taxon>Chordata</taxon>
        <taxon>Craniata</taxon>
        <taxon>Vertebrata</taxon>
        <taxon>Euteleostomi</taxon>
        <taxon>Mammalia</taxon>
        <taxon>Eutheria</taxon>
        <taxon>Euarchontoglires</taxon>
        <taxon>Glires</taxon>
        <taxon>Rodentia</taxon>
        <taxon>Myomorpha</taxon>
        <taxon>Muroidea</taxon>
        <taxon>Muridae</taxon>
        <taxon>Murinae</taxon>
        <taxon>Rattus</taxon>
    </lineage>
</organism>
<gene>
    <name type="primary">Raf1</name>
    <name type="synonym">Raf</name>
</gene>
<sequence>MEHIQGAWKTISNGFGLKDAVFDGSSCISPTIVQQFGYQRRASDDGKLTDSSKTSNTIRVFLPNKQRTVVNVRNGMSLHDCLMKALKVRGLQPECCAVFRLLQEHKGKKARLDWNTDAASLIGEELQVDFLDHVPLTTHNFARKTFLKLAFCDICQKFLLNGFRCQTCGYKFHEHCSTKVPTMCVDWSNIRQLLLFPNSTASDSGVPAPPSFTMRRMRESVSRMPASSQHRYSTPHAFTFNTSSPSSEGSLSQRQRSTSTPNVHMVSTTLPVDSRMIEDAIRSHSESASPSALSSSPNNLSPTGWSQPKTPVPAQRERAPGSGTQEKNKIRPRGQRDSSYYWEIEASEVMLSTRIGSGSFGTVYKGKWHGDVAVKILKVVDPTPEQLQAFRNEVAVLRKTRHVNILLFMGYMTKDNLAIVTQWCEGSSLYKHLHVQETKFQMFQLIDIARQTAQGMDYLHAKNIIHRDMKSNNIFLHEGLTVKIGDFGLATVKSRWSGSQQVEQPTGSVLWMAPEVIRMQDNNPFSFQSDVYSYGIVLYELMTGELPYSHINNRDQIIFMVGRGYASPDLSRLYKNCPKAMKRLVADCVKKVKEERPLFPQILSSIELLQHSLPKINRSASEPSLHRAAHTEDINACTLTTSPRLPVF</sequence>
<dbReference type="EC" id="2.7.11.1" evidence="2"/>
<dbReference type="EMBL" id="M15427">
    <property type="protein sequence ID" value="AAA42001.1"/>
    <property type="molecule type" value="mRNA"/>
</dbReference>
<dbReference type="EMBL" id="BC062071">
    <property type="protein sequence ID" value="AAH62071.1"/>
    <property type="molecule type" value="mRNA"/>
</dbReference>
<dbReference type="PIR" id="A26126">
    <property type="entry name" value="TVRTRF"/>
</dbReference>
<dbReference type="RefSeq" id="NP_036771.1">
    <property type="nucleotide sequence ID" value="NM_012639.2"/>
</dbReference>
<dbReference type="RefSeq" id="XP_038962985.1">
    <property type="nucleotide sequence ID" value="XM_039107057.2"/>
</dbReference>
<dbReference type="RefSeq" id="XP_063141628.1">
    <property type="nucleotide sequence ID" value="XM_063285558.1"/>
</dbReference>
<dbReference type="PDB" id="1RRB">
    <property type="method" value="NMR"/>
    <property type="chains" value="A=51-131"/>
</dbReference>
<dbReference type="PDBsum" id="1RRB"/>
<dbReference type="BMRB" id="P11345"/>
<dbReference type="SMR" id="P11345"/>
<dbReference type="BioGRID" id="246833">
    <property type="interactions" value="11"/>
</dbReference>
<dbReference type="DIP" id="DIP-1073N"/>
<dbReference type="FunCoup" id="P11345">
    <property type="interactions" value="4358"/>
</dbReference>
<dbReference type="IntAct" id="P11345">
    <property type="interactions" value="10"/>
</dbReference>
<dbReference type="STRING" id="10116.ENSRNOP00000013831"/>
<dbReference type="GlyGen" id="P11345">
    <property type="glycosylation" value="1 site"/>
</dbReference>
<dbReference type="iPTMnet" id="P11345"/>
<dbReference type="PhosphoSitePlus" id="P11345"/>
<dbReference type="jPOST" id="P11345"/>
<dbReference type="PaxDb" id="10116-ENSRNOP00000013831"/>
<dbReference type="Ensembl" id="ENSRNOT00000109662.1">
    <property type="protein sequence ID" value="ENSRNOP00000092271.1"/>
    <property type="gene ID" value="ENSRNOG00000010153.7"/>
</dbReference>
<dbReference type="GeneID" id="24703"/>
<dbReference type="KEGG" id="rno:24703"/>
<dbReference type="UCSC" id="RGD:3531">
    <property type="organism name" value="rat"/>
</dbReference>
<dbReference type="AGR" id="RGD:3531"/>
<dbReference type="CTD" id="5894"/>
<dbReference type="RGD" id="3531">
    <property type="gene designation" value="Raf1"/>
</dbReference>
<dbReference type="eggNOG" id="KOG0193">
    <property type="taxonomic scope" value="Eukaryota"/>
</dbReference>
<dbReference type="GeneTree" id="ENSGT00940000156084"/>
<dbReference type="HOGENOM" id="CLU_023684_1_1_1"/>
<dbReference type="InParanoid" id="P11345"/>
<dbReference type="OrthoDB" id="774951at2759"/>
<dbReference type="BRENDA" id="2.7.10.2">
    <property type="organism ID" value="5301"/>
</dbReference>
<dbReference type="Reactome" id="R-RNO-2672351">
    <property type="pathway name" value="Stimuli-sensing channels"/>
</dbReference>
<dbReference type="Reactome" id="R-RNO-392517">
    <property type="pathway name" value="Rap1 signalling"/>
</dbReference>
<dbReference type="Reactome" id="R-RNO-430116">
    <property type="pathway name" value="GP1b-IX-V activation signalling"/>
</dbReference>
<dbReference type="Reactome" id="R-RNO-5621575">
    <property type="pathway name" value="CD209 (DC-SIGN) signaling"/>
</dbReference>
<dbReference type="Reactome" id="R-RNO-5673000">
    <property type="pathway name" value="RAF activation"/>
</dbReference>
<dbReference type="Reactome" id="R-RNO-5674135">
    <property type="pathway name" value="MAP2K and MAPK activation"/>
</dbReference>
<dbReference type="Reactome" id="R-RNO-5674499">
    <property type="pathway name" value="Negative feedback regulation of MAPK pathway"/>
</dbReference>
<dbReference type="Reactome" id="R-RNO-5675221">
    <property type="pathway name" value="Negative regulation of MAPK pathway"/>
</dbReference>
<dbReference type="Reactome" id="R-RNO-9732724">
    <property type="pathway name" value="IFNG signaling activates MAPKs"/>
</dbReference>
<dbReference type="ChiTaRS" id="Raf1">
    <property type="organism name" value="rat"/>
</dbReference>
<dbReference type="EvolutionaryTrace" id="P11345"/>
<dbReference type="PRO" id="PR:P11345"/>
<dbReference type="Proteomes" id="UP000002494">
    <property type="component" value="Chromosome 4"/>
</dbReference>
<dbReference type="Bgee" id="ENSRNOG00000010153">
    <property type="expression patterns" value="Expressed in skeletal muscle tissue and 19 other cell types or tissues"/>
</dbReference>
<dbReference type="GO" id="GO:0005737">
    <property type="term" value="C:cytoplasm"/>
    <property type="evidence" value="ECO:0000314"/>
    <property type="project" value="UniProtKB"/>
</dbReference>
<dbReference type="GO" id="GO:0005829">
    <property type="term" value="C:cytosol"/>
    <property type="evidence" value="ECO:0000266"/>
    <property type="project" value="RGD"/>
</dbReference>
<dbReference type="GO" id="GO:0005794">
    <property type="term" value="C:Golgi apparatus"/>
    <property type="evidence" value="ECO:0000266"/>
    <property type="project" value="RGD"/>
</dbReference>
<dbReference type="GO" id="GO:0005739">
    <property type="term" value="C:mitochondrion"/>
    <property type="evidence" value="ECO:0000318"/>
    <property type="project" value="GO_Central"/>
</dbReference>
<dbReference type="GO" id="GO:0005634">
    <property type="term" value="C:nucleus"/>
    <property type="evidence" value="ECO:0007669"/>
    <property type="project" value="UniProtKB-SubCell"/>
</dbReference>
<dbReference type="GO" id="GO:0005886">
    <property type="term" value="C:plasma membrane"/>
    <property type="evidence" value="ECO:0000314"/>
    <property type="project" value="UniProtKB"/>
</dbReference>
<dbReference type="GO" id="GO:0031143">
    <property type="term" value="C:pseudopodium"/>
    <property type="evidence" value="ECO:0000266"/>
    <property type="project" value="RGD"/>
</dbReference>
<dbReference type="GO" id="GO:0010856">
    <property type="term" value="F:adenylate cyclase activator activity"/>
    <property type="evidence" value="ECO:0000314"/>
    <property type="project" value="BHF-UCL"/>
</dbReference>
<dbReference type="GO" id="GO:0008179">
    <property type="term" value="F:adenylate cyclase binding"/>
    <property type="evidence" value="ECO:0000353"/>
    <property type="project" value="BHF-UCL"/>
</dbReference>
<dbReference type="GO" id="GO:0005524">
    <property type="term" value="F:ATP binding"/>
    <property type="evidence" value="ECO:0000314"/>
    <property type="project" value="RGD"/>
</dbReference>
<dbReference type="GO" id="GO:0019899">
    <property type="term" value="F:enzyme binding"/>
    <property type="evidence" value="ECO:0000266"/>
    <property type="project" value="RGD"/>
</dbReference>
<dbReference type="GO" id="GO:0042802">
    <property type="term" value="F:identical protein binding"/>
    <property type="evidence" value="ECO:0000266"/>
    <property type="project" value="RGD"/>
</dbReference>
<dbReference type="GO" id="GO:0004709">
    <property type="term" value="F:MAP kinase kinase kinase activity"/>
    <property type="evidence" value="ECO:0000314"/>
    <property type="project" value="RGD"/>
</dbReference>
<dbReference type="GO" id="GO:0031434">
    <property type="term" value="F:mitogen-activated protein kinase kinase binding"/>
    <property type="evidence" value="ECO:0000315"/>
    <property type="project" value="RGD"/>
</dbReference>
<dbReference type="GO" id="GO:0004672">
    <property type="term" value="F:protein kinase activity"/>
    <property type="evidence" value="ECO:0000266"/>
    <property type="project" value="RGD"/>
</dbReference>
<dbReference type="GO" id="GO:0106310">
    <property type="term" value="F:protein serine kinase activity"/>
    <property type="evidence" value="ECO:0007669"/>
    <property type="project" value="RHEA"/>
</dbReference>
<dbReference type="GO" id="GO:0004674">
    <property type="term" value="F:protein serine/threonine kinase activity"/>
    <property type="evidence" value="ECO:0000266"/>
    <property type="project" value="RGD"/>
</dbReference>
<dbReference type="GO" id="GO:0044877">
    <property type="term" value="F:protein-containing complex binding"/>
    <property type="evidence" value="ECO:0000353"/>
    <property type="project" value="RGD"/>
</dbReference>
<dbReference type="GO" id="GO:0031267">
    <property type="term" value="F:small GTPase binding"/>
    <property type="evidence" value="ECO:0000266"/>
    <property type="project" value="RGD"/>
</dbReference>
<dbReference type="GO" id="GO:0008270">
    <property type="term" value="F:zinc ion binding"/>
    <property type="evidence" value="ECO:0007669"/>
    <property type="project" value="UniProtKB-KW"/>
</dbReference>
<dbReference type="GO" id="GO:0030154">
    <property type="term" value="P:cell differentiation"/>
    <property type="evidence" value="ECO:0000266"/>
    <property type="project" value="RGD"/>
</dbReference>
<dbReference type="GO" id="GO:0071550">
    <property type="term" value="P:death-inducing signaling complex assembly"/>
    <property type="evidence" value="ECO:0000266"/>
    <property type="project" value="RGD"/>
</dbReference>
<dbReference type="GO" id="GO:0038133">
    <property type="term" value="P:ERBB2-ERBB3 signaling pathway"/>
    <property type="evidence" value="ECO:0000266"/>
    <property type="project" value="RGD"/>
</dbReference>
<dbReference type="GO" id="GO:0008625">
    <property type="term" value="P:extrinsic apoptotic signaling pathway via death domain receptors"/>
    <property type="evidence" value="ECO:0000266"/>
    <property type="project" value="RGD"/>
</dbReference>
<dbReference type="GO" id="GO:0060324">
    <property type="term" value="P:face development"/>
    <property type="evidence" value="ECO:0000266"/>
    <property type="project" value="RGD"/>
</dbReference>
<dbReference type="GO" id="GO:0007507">
    <property type="term" value="P:heart development"/>
    <property type="evidence" value="ECO:0000270"/>
    <property type="project" value="RGD"/>
</dbReference>
<dbReference type="GO" id="GO:0008286">
    <property type="term" value="P:insulin receptor signaling pathway"/>
    <property type="evidence" value="ECO:0000266"/>
    <property type="project" value="RGD"/>
</dbReference>
<dbReference type="GO" id="GO:0035773">
    <property type="term" value="P:insulin secretion involved in cellular response to glucose stimulus"/>
    <property type="evidence" value="ECO:0000266"/>
    <property type="project" value="RGD"/>
</dbReference>
<dbReference type="GO" id="GO:0048009">
    <property type="term" value="P:insulin-like growth factor receptor signaling pathway"/>
    <property type="evidence" value="ECO:0000266"/>
    <property type="project" value="RGD"/>
</dbReference>
<dbReference type="GO" id="GO:0045104">
    <property type="term" value="P:intermediate filament cytoskeleton organization"/>
    <property type="evidence" value="ECO:0000266"/>
    <property type="project" value="RGD"/>
</dbReference>
<dbReference type="GO" id="GO:0001678">
    <property type="term" value="P:intracellular glucose homeostasis"/>
    <property type="evidence" value="ECO:0000266"/>
    <property type="project" value="RGD"/>
</dbReference>
<dbReference type="GO" id="GO:0035556">
    <property type="term" value="P:intracellular signal transduction"/>
    <property type="evidence" value="ECO:0000304"/>
    <property type="project" value="RGD"/>
</dbReference>
<dbReference type="GO" id="GO:0000165">
    <property type="term" value="P:MAPK cascade"/>
    <property type="evidence" value="ECO:0000314"/>
    <property type="project" value="RGD"/>
</dbReference>
<dbReference type="GO" id="GO:0042552">
    <property type="term" value="P:myelination"/>
    <property type="evidence" value="ECO:0000266"/>
    <property type="project" value="RGD"/>
</dbReference>
<dbReference type="GO" id="GO:0043066">
    <property type="term" value="P:negative regulation of apoptotic process"/>
    <property type="evidence" value="ECO:0000266"/>
    <property type="project" value="RGD"/>
</dbReference>
<dbReference type="GO" id="GO:0008285">
    <property type="term" value="P:negative regulation of cell population proliferation"/>
    <property type="evidence" value="ECO:0000266"/>
    <property type="project" value="RGD"/>
</dbReference>
<dbReference type="GO" id="GO:1902042">
    <property type="term" value="P:negative regulation of extrinsic apoptotic signaling pathway via death domain receptors"/>
    <property type="evidence" value="ECO:0000266"/>
    <property type="project" value="RGD"/>
</dbReference>
<dbReference type="GO" id="GO:0031333">
    <property type="term" value="P:negative regulation of protein-containing complex assembly"/>
    <property type="evidence" value="ECO:0000266"/>
    <property type="project" value="RGD"/>
</dbReference>
<dbReference type="GO" id="GO:0048011">
    <property type="term" value="P:neurotrophin TRK receptor signaling pathway"/>
    <property type="evidence" value="ECO:0000266"/>
    <property type="project" value="RGD"/>
</dbReference>
<dbReference type="GO" id="GO:0043410">
    <property type="term" value="P:positive regulation of MAPK cascade"/>
    <property type="evidence" value="ECO:0000266"/>
    <property type="project" value="RGD"/>
</dbReference>
<dbReference type="GO" id="GO:0045944">
    <property type="term" value="P:positive regulation of transcription by RNA polymerase II"/>
    <property type="evidence" value="ECO:0000266"/>
    <property type="project" value="RGD"/>
</dbReference>
<dbReference type="GO" id="GO:0001666">
    <property type="term" value="P:response to hypoxia"/>
    <property type="evidence" value="ECO:0000314"/>
    <property type="project" value="RGD"/>
</dbReference>
<dbReference type="GO" id="GO:0035994">
    <property type="term" value="P:response to muscle stretch"/>
    <property type="evidence" value="ECO:0000266"/>
    <property type="project" value="RGD"/>
</dbReference>
<dbReference type="GO" id="GO:0014044">
    <property type="term" value="P:Schwann cell development"/>
    <property type="evidence" value="ECO:0000266"/>
    <property type="project" value="RGD"/>
</dbReference>
<dbReference type="GO" id="GO:0035019">
    <property type="term" value="P:somatic stem cell population maintenance"/>
    <property type="evidence" value="ECO:0000266"/>
    <property type="project" value="RGD"/>
</dbReference>
<dbReference type="GO" id="GO:0048538">
    <property type="term" value="P:thymus development"/>
    <property type="evidence" value="ECO:0000266"/>
    <property type="project" value="RGD"/>
</dbReference>
<dbReference type="GO" id="GO:0030878">
    <property type="term" value="P:thyroid gland development"/>
    <property type="evidence" value="ECO:0000266"/>
    <property type="project" value="RGD"/>
</dbReference>
<dbReference type="GO" id="GO:0044342">
    <property type="term" value="P:type B pancreatic cell proliferation"/>
    <property type="evidence" value="ECO:0000266"/>
    <property type="project" value="RGD"/>
</dbReference>
<dbReference type="CDD" id="cd20870">
    <property type="entry name" value="C1_A_C-Raf"/>
    <property type="match status" value="1"/>
</dbReference>
<dbReference type="CDD" id="cd17135">
    <property type="entry name" value="RBD_CRAF"/>
    <property type="match status" value="1"/>
</dbReference>
<dbReference type="CDD" id="cd14149">
    <property type="entry name" value="STKc_C-Raf"/>
    <property type="match status" value="1"/>
</dbReference>
<dbReference type="FunFam" id="3.10.20.90:FF:000015">
    <property type="entry name" value="B-Raf proto-oncogene serine/threonine-protein kinase"/>
    <property type="match status" value="1"/>
</dbReference>
<dbReference type="FunFam" id="3.30.200.20:FF:000024">
    <property type="entry name" value="B-Raf proto-oncogene serine/threonine-protein kinase"/>
    <property type="match status" value="1"/>
</dbReference>
<dbReference type="FunFam" id="3.30.60.20:FF:000004">
    <property type="entry name" value="B-Raf proto-oncogene serine/threonine-protein kinase"/>
    <property type="match status" value="1"/>
</dbReference>
<dbReference type="FunFam" id="1.10.510.10:FF:000036">
    <property type="entry name" value="RAF proto-oncogene serine/threonine-protein kinase"/>
    <property type="match status" value="1"/>
</dbReference>
<dbReference type="Gene3D" id="3.30.60.20">
    <property type="match status" value="1"/>
</dbReference>
<dbReference type="Gene3D" id="3.10.20.90">
    <property type="entry name" value="Phosphatidylinositol 3-kinase Catalytic Subunit, Chain A, domain 1"/>
    <property type="match status" value="1"/>
</dbReference>
<dbReference type="Gene3D" id="3.30.200.20">
    <property type="entry name" value="Phosphorylase Kinase, domain 1"/>
    <property type="match status" value="1"/>
</dbReference>
<dbReference type="Gene3D" id="1.10.510.10">
    <property type="entry name" value="Transferase(Phosphotransferase) domain 1"/>
    <property type="match status" value="1"/>
</dbReference>
<dbReference type="InterPro" id="IPR046349">
    <property type="entry name" value="C1-like_sf"/>
</dbReference>
<dbReference type="InterPro" id="IPR020454">
    <property type="entry name" value="DAG/PE-bd"/>
</dbReference>
<dbReference type="InterPro" id="IPR011009">
    <property type="entry name" value="Kinase-like_dom_sf"/>
</dbReference>
<dbReference type="InterPro" id="IPR002219">
    <property type="entry name" value="PE/DAG-bd"/>
</dbReference>
<dbReference type="InterPro" id="IPR000719">
    <property type="entry name" value="Prot_kinase_dom"/>
</dbReference>
<dbReference type="InterPro" id="IPR017441">
    <property type="entry name" value="Protein_kinase_ATP_BS"/>
</dbReference>
<dbReference type="InterPro" id="IPR003116">
    <property type="entry name" value="RBD_dom"/>
</dbReference>
<dbReference type="InterPro" id="IPR008271">
    <property type="entry name" value="Ser/Thr_kinase_AS"/>
</dbReference>
<dbReference type="InterPro" id="IPR051681">
    <property type="entry name" value="Ser/Thr_Kinases-Pseudokinases"/>
</dbReference>
<dbReference type="InterPro" id="IPR029071">
    <property type="entry name" value="Ubiquitin-like_domsf"/>
</dbReference>
<dbReference type="PANTHER" id="PTHR44329:SF22">
    <property type="entry name" value="RAF PROTO-ONCOGENE SERINE_THREONINE-PROTEIN KINASE"/>
    <property type="match status" value="1"/>
</dbReference>
<dbReference type="PANTHER" id="PTHR44329">
    <property type="entry name" value="SERINE/THREONINE-PROTEIN KINASE TNNI3K-RELATED"/>
    <property type="match status" value="1"/>
</dbReference>
<dbReference type="Pfam" id="PF00130">
    <property type="entry name" value="C1_1"/>
    <property type="match status" value="1"/>
</dbReference>
<dbReference type="Pfam" id="PF00069">
    <property type="entry name" value="Pkinase"/>
    <property type="match status" value="1"/>
</dbReference>
<dbReference type="Pfam" id="PF02196">
    <property type="entry name" value="RBD"/>
    <property type="match status" value="1"/>
</dbReference>
<dbReference type="PRINTS" id="PR00008">
    <property type="entry name" value="DAGPEDOMAIN"/>
</dbReference>
<dbReference type="SMART" id="SM00109">
    <property type="entry name" value="C1"/>
    <property type="match status" value="1"/>
</dbReference>
<dbReference type="SMART" id="SM00455">
    <property type="entry name" value="RBD"/>
    <property type="match status" value="1"/>
</dbReference>
<dbReference type="SMART" id="SM00220">
    <property type="entry name" value="S_TKc"/>
    <property type="match status" value="1"/>
</dbReference>
<dbReference type="SUPFAM" id="SSF57889">
    <property type="entry name" value="Cysteine-rich domain"/>
    <property type="match status" value="1"/>
</dbReference>
<dbReference type="SUPFAM" id="SSF56112">
    <property type="entry name" value="Protein kinase-like (PK-like)"/>
    <property type="match status" value="1"/>
</dbReference>
<dbReference type="SUPFAM" id="SSF54236">
    <property type="entry name" value="Ubiquitin-like"/>
    <property type="match status" value="1"/>
</dbReference>
<dbReference type="PROSITE" id="PS00107">
    <property type="entry name" value="PROTEIN_KINASE_ATP"/>
    <property type="match status" value="1"/>
</dbReference>
<dbReference type="PROSITE" id="PS50011">
    <property type="entry name" value="PROTEIN_KINASE_DOM"/>
    <property type="match status" value="1"/>
</dbReference>
<dbReference type="PROSITE" id="PS00108">
    <property type="entry name" value="PROTEIN_KINASE_ST"/>
    <property type="match status" value="1"/>
</dbReference>
<dbReference type="PROSITE" id="PS50898">
    <property type="entry name" value="RBD"/>
    <property type="match status" value="1"/>
</dbReference>
<dbReference type="PROSITE" id="PS00479">
    <property type="entry name" value="ZF_DAG_PE_1"/>
    <property type="match status" value="1"/>
</dbReference>
<dbReference type="PROSITE" id="PS50081">
    <property type="entry name" value="ZF_DAG_PE_2"/>
    <property type="match status" value="1"/>
</dbReference>